<name>UB2G2_MOUSE</name>
<gene>
    <name evidence="5" type="primary">Ube2g2</name>
    <name evidence="1" type="synonym">Ubc7</name>
</gene>
<dbReference type="EC" id="2.3.2.23"/>
<dbReference type="EMBL" id="AF296657">
    <property type="protein sequence ID" value="AAK52608.1"/>
    <property type="molecule type" value="mRNA"/>
</dbReference>
<dbReference type="EMBL" id="BC010321">
    <property type="protein sequence ID" value="AAH10321.1"/>
    <property type="molecule type" value="mRNA"/>
</dbReference>
<dbReference type="CCDS" id="CCDS56722.1"/>
<dbReference type="RefSeq" id="NP_062777.2">
    <property type="nucleotide sequence ID" value="NM_019803.3"/>
</dbReference>
<dbReference type="PDB" id="3FSH">
    <property type="method" value="X-ray"/>
    <property type="resolution" value="2.76 A"/>
    <property type="chains" value="A/B=1-165"/>
</dbReference>
<dbReference type="PDBsum" id="3FSH"/>
<dbReference type="BMRB" id="P60605"/>
<dbReference type="SMR" id="P60605"/>
<dbReference type="BioGRID" id="204416">
    <property type="interactions" value="14"/>
</dbReference>
<dbReference type="DIP" id="DIP-29061N"/>
<dbReference type="FunCoup" id="P60605">
    <property type="interactions" value="3123"/>
</dbReference>
<dbReference type="IntAct" id="P60605">
    <property type="interactions" value="1"/>
</dbReference>
<dbReference type="MINT" id="P60605"/>
<dbReference type="STRING" id="10090.ENSMUSP00000133515"/>
<dbReference type="iPTMnet" id="P60605"/>
<dbReference type="PhosphoSitePlus" id="P60605"/>
<dbReference type="SwissPalm" id="P60605"/>
<dbReference type="PaxDb" id="10090-ENSMUSP00000133515"/>
<dbReference type="PeptideAtlas" id="P60605"/>
<dbReference type="ProteomicsDB" id="298164"/>
<dbReference type="Pumba" id="P60605"/>
<dbReference type="Antibodypedia" id="1148">
    <property type="antibodies" value="423 antibodies from 32 providers"/>
</dbReference>
<dbReference type="DNASU" id="22213"/>
<dbReference type="Ensembl" id="ENSMUST00000174510.8">
    <property type="protein sequence ID" value="ENSMUSP00000133515.2"/>
    <property type="gene ID" value="ENSMUSG00000009293.18"/>
</dbReference>
<dbReference type="GeneID" id="22213"/>
<dbReference type="KEGG" id="mmu:22213"/>
<dbReference type="UCSC" id="uc007fwa.1">
    <property type="organism name" value="mouse"/>
</dbReference>
<dbReference type="AGR" id="MGI:1343188"/>
<dbReference type="CTD" id="7327"/>
<dbReference type="MGI" id="MGI:1343188">
    <property type="gene designation" value="Ube2g2"/>
</dbReference>
<dbReference type="VEuPathDB" id="HostDB:ENSMUSG00000009293"/>
<dbReference type="eggNOG" id="KOG0426">
    <property type="taxonomic scope" value="Eukaryota"/>
</dbReference>
<dbReference type="GeneTree" id="ENSGT00940000158193"/>
<dbReference type="HOGENOM" id="CLU_030988_10_1_1"/>
<dbReference type="InParanoid" id="P60605"/>
<dbReference type="OMA" id="APDGMFT"/>
<dbReference type="OrthoDB" id="19692at2759"/>
<dbReference type="PhylomeDB" id="P60605"/>
<dbReference type="TreeFam" id="TF101118"/>
<dbReference type="Reactome" id="R-MMU-8866652">
    <property type="pathway name" value="Synthesis of active ubiquitin: roles of E1 and E2 enzymes"/>
</dbReference>
<dbReference type="Reactome" id="R-MMU-983168">
    <property type="pathway name" value="Antigen processing: Ubiquitination &amp; Proteasome degradation"/>
</dbReference>
<dbReference type="UniPathway" id="UPA00143"/>
<dbReference type="BioGRID-ORCS" id="22213">
    <property type="hits" value="20 hits in 76 CRISPR screens"/>
</dbReference>
<dbReference type="ChiTaRS" id="Ube2g2">
    <property type="organism name" value="mouse"/>
</dbReference>
<dbReference type="EvolutionaryTrace" id="P60605"/>
<dbReference type="PRO" id="PR:P60605"/>
<dbReference type="Proteomes" id="UP000000589">
    <property type="component" value="Chromosome 10"/>
</dbReference>
<dbReference type="RNAct" id="P60605">
    <property type="molecule type" value="protein"/>
</dbReference>
<dbReference type="Bgee" id="ENSMUSG00000009293">
    <property type="expression patterns" value="Expressed in otic placode and 259 other cell types or tissues"/>
</dbReference>
<dbReference type="ExpressionAtlas" id="P60605">
    <property type="expression patterns" value="baseline and differential"/>
</dbReference>
<dbReference type="GO" id="GO:0005829">
    <property type="term" value="C:cytosol"/>
    <property type="evidence" value="ECO:0000314"/>
    <property type="project" value="MGI"/>
</dbReference>
<dbReference type="GO" id="GO:0005783">
    <property type="term" value="C:endoplasmic reticulum"/>
    <property type="evidence" value="ECO:0000314"/>
    <property type="project" value="MGI"/>
</dbReference>
<dbReference type="GO" id="GO:0005811">
    <property type="term" value="C:lipid droplet"/>
    <property type="evidence" value="ECO:0000250"/>
    <property type="project" value="UniProtKB"/>
</dbReference>
<dbReference type="GO" id="GO:0005524">
    <property type="term" value="F:ATP binding"/>
    <property type="evidence" value="ECO:0007669"/>
    <property type="project" value="UniProtKB-KW"/>
</dbReference>
<dbReference type="GO" id="GO:0042802">
    <property type="term" value="F:identical protein binding"/>
    <property type="evidence" value="ECO:0000353"/>
    <property type="project" value="IntAct"/>
</dbReference>
<dbReference type="GO" id="GO:0061631">
    <property type="term" value="F:ubiquitin conjugating enzyme activity"/>
    <property type="evidence" value="ECO:0000314"/>
    <property type="project" value="MGI"/>
</dbReference>
<dbReference type="GO" id="GO:0004842">
    <property type="term" value="F:ubiquitin-protein transferase activity"/>
    <property type="evidence" value="ECO:0000250"/>
    <property type="project" value="UniProtKB"/>
</dbReference>
<dbReference type="GO" id="GO:0035458">
    <property type="term" value="P:cellular response to interferon-beta"/>
    <property type="evidence" value="ECO:0007669"/>
    <property type="project" value="Ensembl"/>
</dbReference>
<dbReference type="GO" id="GO:0036503">
    <property type="term" value="P:ERAD pathway"/>
    <property type="evidence" value="ECO:0000314"/>
    <property type="project" value="MGI"/>
</dbReference>
<dbReference type="GO" id="GO:1904153">
    <property type="term" value="P:negative regulation of retrograde protein transport, ER to cytosol"/>
    <property type="evidence" value="ECO:0007669"/>
    <property type="project" value="Ensembl"/>
</dbReference>
<dbReference type="GO" id="GO:0030163">
    <property type="term" value="P:protein catabolic process"/>
    <property type="evidence" value="ECO:0000266"/>
    <property type="project" value="MGI"/>
</dbReference>
<dbReference type="GO" id="GO:0070936">
    <property type="term" value="P:protein K48-linked ubiquitination"/>
    <property type="evidence" value="ECO:0000250"/>
    <property type="project" value="UniProtKB"/>
</dbReference>
<dbReference type="CDD" id="cd23796">
    <property type="entry name" value="UBCc_UBE2G2"/>
    <property type="match status" value="1"/>
</dbReference>
<dbReference type="FunFam" id="3.10.110.10:FF:000008">
    <property type="entry name" value="Ubiquitin-conjugating enzyme E2 G2"/>
    <property type="match status" value="1"/>
</dbReference>
<dbReference type="Gene3D" id="3.10.110.10">
    <property type="entry name" value="Ubiquitin Conjugating Enzyme"/>
    <property type="match status" value="1"/>
</dbReference>
<dbReference type="IDEAL" id="IID50078"/>
<dbReference type="InterPro" id="IPR050113">
    <property type="entry name" value="Ub_conjugating_enzyme"/>
</dbReference>
<dbReference type="InterPro" id="IPR000608">
    <property type="entry name" value="UBQ-conjugat_E2_core"/>
</dbReference>
<dbReference type="InterPro" id="IPR023313">
    <property type="entry name" value="UBQ-conjugating_AS"/>
</dbReference>
<dbReference type="InterPro" id="IPR016135">
    <property type="entry name" value="UBQ-conjugating_enzyme/RWD"/>
</dbReference>
<dbReference type="PANTHER" id="PTHR24067">
    <property type="entry name" value="UBIQUITIN-CONJUGATING ENZYME E2"/>
    <property type="match status" value="1"/>
</dbReference>
<dbReference type="Pfam" id="PF00179">
    <property type="entry name" value="UQ_con"/>
    <property type="match status" value="1"/>
</dbReference>
<dbReference type="SMART" id="SM00212">
    <property type="entry name" value="UBCc"/>
    <property type="match status" value="1"/>
</dbReference>
<dbReference type="SUPFAM" id="SSF54495">
    <property type="entry name" value="UBC-like"/>
    <property type="match status" value="1"/>
</dbReference>
<dbReference type="PROSITE" id="PS00183">
    <property type="entry name" value="UBC_1"/>
    <property type="match status" value="1"/>
</dbReference>
<dbReference type="PROSITE" id="PS50127">
    <property type="entry name" value="UBC_2"/>
    <property type="match status" value="1"/>
</dbReference>
<keyword id="KW-0002">3D-structure</keyword>
<keyword id="KW-0007">Acetylation</keyword>
<keyword id="KW-0067">ATP-binding</keyword>
<keyword id="KW-0256">Endoplasmic reticulum</keyword>
<keyword id="KW-0551">Lipid droplet</keyword>
<keyword id="KW-0547">Nucleotide-binding</keyword>
<keyword id="KW-1185">Reference proteome</keyword>
<keyword id="KW-0808">Transferase</keyword>
<keyword id="KW-0833">Ubl conjugation pathway</keyword>
<sequence length="165" mass="18566">MAGTALKRLMAEYKQLTLNPPEGIVAGPMNEENFFEWEALIMGPEDTCFEFGVFPAILSFPLDYPLSPPKMRFTCEMFHPNIYPDGRVCISILHAPGDDPMGYESSAERWSPVQSVEKILLSVVSMLAEPNDESGANVDASKMWRDDREQFYKIAKQIVQKSLGL</sequence>
<evidence type="ECO:0000250" key="1">
    <source>
        <dbReference type="UniProtKB" id="P60604"/>
    </source>
</evidence>
<evidence type="ECO:0000255" key="2">
    <source>
        <dbReference type="PROSITE-ProRule" id="PRU00388"/>
    </source>
</evidence>
<evidence type="ECO:0000255" key="3">
    <source>
        <dbReference type="PROSITE-ProRule" id="PRU10133"/>
    </source>
</evidence>
<evidence type="ECO:0000269" key="4">
    <source>
    </source>
</evidence>
<evidence type="ECO:0000312" key="5">
    <source>
        <dbReference type="MGI" id="MGI:1343188"/>
    </source>
</evidence>
<evidence type="ECO:0007829" key="6">
    <source>
        <dbReference type="PDB" id="3FSH"/>
    </source>
</evidence>
<accession>P60605</accession>
<accession>P56554</accession>
<feature type="initiator methionine" description="Removed" evidence="1">
    <location>
        <position position="1"/>
    </location>
</feature>
<feature type="chain" id="PRO_0000082484" description="Ubiquitin-conjugating enzyme E2 G2">
    <location>
        <begin position="2"/>
        <end position="165"/>
    </location>
</feature>
<feature type="domain" description="UBC core" evidence="2">
    <location>
        <begin position="4"/>
        <end position="164"/>
    </location>
</feature>
<feature type="active site" description="Glycyl thioester intermediate" evidence="2 3">
    <location>
        <position position="89"/>
    </location>
</feature>
<feature type="modified residue" description="N-acetylalanine" evidence="1">
    <location>
        <position position="2"/>
    </location>
</feature>
<feature type="helix" evidence="6">
    <location>
        <begin position="2"/>
        <end position="18"/>
    </location>
</feature>
<feature type="strand" evidence="6">
    <location>
        <begin position="24"/>
        <end position="30"/>
    </location>
</feature>
<feature type="strand" evidence="6">
    <location>
        <begin position="36"/>
        <end position="42"/>
    </location>
</feature>
<feature type="turn" evidence="6">
    <location>
        <begin position="48"/>
        <end position="51"/>
    </location>
</feature>
<feature type="strand" evidence="6">
    <location>
        <begin position="53"/>
        <end position="59"/>
    </location>
</feature>
<feature type="turn" evidence="6">
    <location>
        <begin position="62"/>
        <end position="65"/>
    </location>
</feature>
<feature type="strand" evidence="6">
    <location>
        <begin position="70"/>
        <end position="75"/>
    </location>
</feature>
<feature type="strand" evidence="6">
    <location>
        <begin position="86"/>
        <end position="88"/>
    </location>
</feature>
<feature type="helix" evidence="6">
    <location>
        <begin position="91"/>
        <end position="93"/>
    </location>
</feature>
<feature type="helix" evidence="6">
    <location>
        <begin position="116"/>
        <end position="128"/>
    </location>
</feature>
<feature type="helix" evidence="6">
    <location>
        <begin position="132"/>
        <end position="134"/>
    </location>
</feature>
<feature type="helix" evidence="6">
    <location>
        <begin position="138"/>
        <end position="145"/>
    </location>
</feature>
<feature type="helix" evidence="6">
    <location>
        <begin position="148"/>
        <end position="162"/>
    </location>
</feature>
<comment type="function">
    <text evidence="1">Accepts ubiquitin from the E1 complex and catalyzes its covalent attachment to other proteins. In vitro catalyzes 'Lys-48'-linked polyubiquitination. Involved in endoplasmic reticulum-associated degradation (ERAD). Required for sterol-induced ubiquitination of 3-hydroxy-3-methylglutaryl coenzyme A reductase and its subsequent proteasomal degradation.</text>
</comment>
<comment type="catalytic activity">
    <reaction evidence="1 2 3">
        <text>S-ubiquitinyl-[E1 ubiquitin-activating enzyme]-L-cysteine + [E2 ubiquitin-conjugating enzyme]-L-cysteine = [E1 ubiquitin-activating enzyme]-L-cysteine + S-ubiquitinyl-[E2 ubiquitin-conjugating enzyme]-L-cysteine.</text>
        <dbReference type="EC" id="2.3.2.23"/>
    </reaction>
</comment>
<comment type="pathway">
    <text evidence="2">Protein modification; protein ubiquitination.</text>
</comment>
<comment type="subunit">
    <text evidence="1">Interacts with AUP1 (via C-terminus); the interaction recruits UBE2G2 to lipid droplets. Interacts with ubiquitin ligases AMFR/gp78 and RNF139/TRC8; recruitment to lipid droplets by AUP1 facilitates interaction of UBE2G2 with AMFR and RNF139, leading to sterol-induced ubiquitination of 3-hydroxy-3-methylglutaryl coenzyme A reductase and its subsequent proteasomal degradation.</text>
</comment>
<comment type="interaction">
    <interactant intactId="EBI-9108745">
        <id>P60605</id>
    </interactant>
    <interactant intactId="EBI-9108745">
        <id>P60605</id>
        <label>Ube2g2</label>
    </interactant>
    <organismsDiffer>false</organismsDiffer>
    <experiments>13</experiments>
</comment>
<comment type="interaction">
    <interactant intactId="EBI-9108745">
        <id>P60605</id>
    </interactant>
    <interactant intactId="EBI-1046367">
        <id>Q9UKV5</id>
        <label>AMFR</label>
    </interactant>
    <organismsDiffer>true</organismsDiffer>
    <experiments>10</experiments>
</comment>
<comment type="subcellular location">
    <subcellularLocation>
        <location evidence="4">Endoplasmic reticulum</location>
    </subcellularLocation>
    <subcellularLocation>
        <location evidence="1">Lipid droplet</location>
    </subcellularLocation>
</comment>
<comment type="similarity">
    <text evidence="2">Belongs to the ubiquitin-conjugating enzyme family.</text>
</comment>
<protein>
    <recommendedName>
        <fullName>Ubiquitin-conjugating enzyme E2 G2</fullName>
        <ecNumber>2.3.2.23</ecNumber>
    </recommendedName>
    <alternativeName>
        <fullName>E2 ubiquitin-conjugating enzyme G2</fullName>
    </alternativeName>
    <alternativeName>
        <fullName>Ubiquitin carrier protein G2</fullName>
    </alternativeName>
    <alternativeName>
        <fullName>Ubiquitin-protein ligase G2</fullName>
    </alternativeName>
</protein>
<organism>
    <name type="scientific">Mus musculus</name>
    <name type="common">Mouse</name>
    <dbReference type="NCBI Taxonomy" id="10090"/>
    <lineage>
        <taxon>Eukaryota</taxon>
        <taxon>Metazoa</taxon>
        <taxon>Chordata</taxon>
        <taxon>Craniata</taxon>
        <taxon>Vertebrata</taxon>
        <taxon>Euteleostomi</taxon>
        <taxon>Mammalia</taxon>
        <taxon>Eutheria</taxon>
        <taxon>Euarchontoglires</taxon>
        <taxon>Glires</taxon>
        <taxon>Rodentia</taxon>
        <taxon>Myomorpha</taxon>
        <taxon>Muroidea</taxon>
        <taxon>Muridae</taxon>
        <taxon>Murinae</taxon>
        <taxon>Mus</taxon>
        <taxon>Mus</taxon>
    </lineage>
</organism>
<reference key="1">
    <citation type="journal article" date="2001" name="J. Biol. Chem.">
        <title>Endoplasmic reticulum (ER)-associated degradation of T cell receptor subunits. Involvement of ER-associated ubiquitin-conjugating enzymes (E2s).</title>
        <authorList>
            <person name="Tiwari S."/>
            <person name="Weissman A.M."/>
        </authorList>
    </citation>
    <scope>NUCLEOTIDE SEQUENCE [MRNA]</scope>
    <scope>SUBCELLULAR LOCATION</scope>
    <source>
        <strain>C57BL/6J</strain>
        <tissue>Fetus</tissue>
    </source>
</reference>
<reference key="2">
    <citation type="journal article" date="2004" name="Genome Res.">
        <title>The status, quality, and expansion of the NIH full-length cDNA project: the Mammalian Gene Collection (MGC).</title>
        <authorList>
            <consortium name="The MGC Project Team"/>
        </authorList>
    </citation>
    <scope>NUCLEOTIDE SEQUENCE [LARGE SCALE MRNA]</scope>
</reference>
<reference key="3">
    <citation type="journal article" date="2010" name="Cell">
        <title>A tissue-specific atlas of mouse protein phosphorylation and expression.</title>
        <authorList>
            <person name="Huttlin E.L."/>
            <person name="Jedrychowski M.P."/>
            <person name="Elias J.E."/>
            <person name="Goswami T."/>
            <person name="Rad R."/>
            <person name="Beausoleil S.A."/>
            <person name="Villen J."/>
            <person name="Haas W."/>
            <person name="Sowa M.E."/>
            <person name="Gygi S.P."/>
        </authorList>
    </citation>
    <scope>IDENTIFICATION BY MASS SPECTROMETRY [LARGE SCALE ANALYSIS]</scope>
    <source>
        <tissue>Brain</tissue>
        <tissue>Heart</tissue>
        <tissue>Kidney</tissue>
        <tissue>Liver</tissue>
        <tissue>Pancreas</tissue>
        <tissue>Spleen</tissue>
        <tissue>Testis</tissue>
    </source>
</reference>
<proteinExistence type="evidence at protein level"/>